<protein>
    <recommendedName>
        <fullName>UPF0213 protein SAUSA300_0465</fullName>
    </recommendedName>
</protein>
<organism>
    <name type="scientific">Staphylococcus aureus (strain USA300)</name>
    <dbReference type="NCBI Taxonomy" id="367830"/>
    <lineage>
        <taxon>Bacteria</taxon>
        <taxon>Bacillati</taxon>
        <taxon>Bacillota</taxon>
        <taxon>Bacilli</taxon>
        <taxon>Bacillales</taxon>
        <taxon>Staphylococcaceae</taxon>
        <taxon>Staphylococcus</taxon>
    </lineage>
</organism>
<reference key="1">
    <citation type="journal article" date="2006" name="Lancet">
        <title>Complete genome sequence of USA300, an epidemic clone of community-acquired meticillin-resistant Staphylococcus aureus.</title>
        <authorList>
            <person name="Diep B.A."/>
            <person name="Gill S.R."/>
            <person name="Chang R.F."/>
            <person name="Phan T.H."/>
            <person name="Chen J.H."/>
            <person name="Davidson M.G."/>
            <person name="Lin F."/>
            <person name="Lin J."/>
            <person name="Carleton H.A."/>
            <person name="Mongodin E.F."/>
            <person name="Sensabaugh G.F."/>
            <person name="Perdreau-Remington F."/>
        </authorList>
    </citation>
    <scope>NUCLEOTIDE SEQUENCE [LARGE SCALE GENOMIC DNA]</scope>
    <source>
        <strain>USA300</strain>
    </source>
</reference>
<dbReference type="EMBL" id="CP000255">
    <property type="protein sequence ID" value="ABD21216.1"/>
    <property type="molecule type" value="Genomic_DNA"/>
</dbReference>
<dbReference type="RefSeq" id="WP_000377064.1">
    <property type="nucleotide sequence ID" value="NZ_CP027476.1"/>
</dbReference>
<dbReference type="SMR" id="Q2FJF4"/>
<dbReference type="KEGG" id="saa:SAUSA300_0465"/>
<dbReference type="HOGENOM" id="CLU_135650_0_3_9"/>
<dbReference type="OMA" id="VYVEQWP"/>
<dbReference type="Proteomes" id="UP000001939">
    <property type="component" value="Chromosome"/>
</dbReference>
<dbReference type="CDD" id="cd10456">
    <property type="entry name" value="GIY-YIG_UPF0213"/>
    <property type="match status" value="1"/>
</dbReference>
<dbReference type="Gene3D" id="3.40.1440.10">
    <property type="entry name" value="GIY-YIG endonuclease"/>
    <property type="match status" value="1"/>
</dbReference>
<dbReference type="InterPro" id="IPR000305">
    <property type="entry name" value="GIY-YIG_endonuc"/>
</dbReference>
<dbReference type="InterPro" id="IPR035901">
    <property type="entry name" value="GIY-YIG_endonuc_sf"/>
</dbReference>
<dbReference type="InterPro" id="IPR050190">
    <property type="entry name" value="UPF0213_domain"/>
</dbReference>
<dbReference type="PANTHER" id="PTHR34477">
    <property type="entry name" value="UPF0213 PROTEIN YHBQ"/>
    <property type="match status" value="1"/>
</dbReference>
<dbReference type="PANTHER" id="PTHR34477:SF1">
    <property type="entry name" value="UPF0213 PROTEIN YHBQ"/>
    <property type="match status" value="1"/>
</dbReference>
<dbReference type="Pfam" id="PF01541">
    <property type="entry name" value="GIY-YIG"/>
    <property type="match status" value="1"/>
</dbReference>
<dbReference type="SMART" id="SM00465">
    <property type="entry name" value="GIYc"/>
    <property type="match status" value="1"/>
</dbReference>
<dbReference type="SUPFAM" id="SSF82771">
    <property type="entry name" value="GIY-YIG endonuclease"/>
    <property type="match status" value="1"/>
</dbReference>
<dbReference type="PROSITE" id="PS50164">
    <property type="entry name" value="GIY_YIG"/>
    <property type="match status" value="1"/>
</dbReference>
<name>Y465_STAA3</name>
<accession>Q2FJF4</accession>
<comment type="similarity">
    <text evidence="2">Belongs to the UPF0213 family.</text>
</comment>
<proteinExistence type="inferred from homology"/>
<feature type="chain" id="PRO_1000063686" description="UPF0213 protein SAUSA300_0465">
    <location>
        <begin position="1"/>
        <end position="82"/>
    </location>
</feature>
<feature type="domain" description="GIY-YIG" evidence="1">
    <location>
        <begin position="2"/>
        <end position="77"/>
    </location>
</feature>
<gene>
    <name type="ordered locus">SAUSA300_0465</name>
</gene>
<evidence type="ECO:0000255" key="1">
    <source>
        <dbReference type="PROSITE-ProRule" id="PRU00977"/>
    </source>
</evidence>
<evidence type="ECO:0000305" key="2"/>
<sequence>MDSHFVYIVKCSDGSLYTGYAKDVNARVEKHNRGQGAKYTKVRRPVHLVYQEMYETKSEALKREYEIKTYTRQKKLRLIKER</sequence>